<accession>Q5XIZ9</accession>
<accession>Q568A2</accession>
<comment type="caution">
    <text evidence="4">It is uncertain whether Met-1 or Met-28 is the initiator.</text>
</comment>
<comment type="sequence caution" evidence="4">
    <conflict type="miscellaneous discrepancy">
        <sequence resource="EMBL-CDS" id="AAH92947"/>
    </conflict>
    <text>Contaminating sequence. Potential poly-A sequence.</text>
</comment>
<gene>
    <name type="primary">rtkn2</name>
    <name type="synonym">plekhk1</name>
    <name type="ORF">zgc:92568</name>
</gene>
<organism>
    <name type="scientific">Danio rerio</name>
    <name type="common">Zebrafish</name>
    <name type="synonym">Brachydanio rerio</name>
    <dbReference type="NCBI Taxonomy" id="7955"/>
    <lineage>
        <taxon>Eukaryota</taxon>
        <taxon>Metazoa</taxon>
        <taxon>Chordata</taxon>
        <taxon>Craniata</taxon>
        <taxon>Vertebrata</taxon>
        <taxon>Euteleostomi</taxon>
        <taxon>Actinopterygii</taxon>
        <taxon>Neopterygii</taxon>
        <taxon>Teleostei</taxon>
        <taxon>Ostariophysi</taxon>
        <taxon>Cypriniformes</taxon>
        <taxon>Danionidae</taxon>
        <taxon>Danioninae</taxon>
        <taxon>Danio</taxon>
    </lineage>
</organism>
<evidence type="ECO:0000255" key="1">
    <source>
        <dbReference type="PROSITE-ProRule" id="PRU00145"/>
    </source>
</evidence>
<evidence type="ECO:0000255" key="2">
    <source>
        <dbReference type="PROSITE-ProRule" id="PRU01207"/>
    </source>
</evidence>
<evidence type="ECO:0000256" key="3">
    <source>
        <dbReference type="SAM" id="MobiDB-lite"/>
    </source>
</evidence>
<evidence type="ECO:0000305" key="4"/>
<keyword id="KW-0175">Coiled coil</keyword>
<keyword id="KW-1185">Reference proteome</keyword>
<sequence>MDPPRDIQHFKRNIASRSTVSSCSSLAMEIKRKKIRESMFFPSEDCDIKEKMEFEMRMRAGAYKLMVASTKKEQVLDASRSLLTCNARIKAYMSEAQKRTGHQDFRRPSDSQGQVPCKGKVAISGLRIPLFWKDSEHFNSKGNTQRVAVFCLMKIGSEIFDTEMVIADSSMTDICFEGVKIFSEVKPDFELTFELYICGLDEEATFANTPKKLARKLRSSFGRSSGRKLCPLLDGGDPDTFLQSNPIPPGARYSLLAYTTLGLEQAEGSFQSHSLIILQNVEASSWLPLYGNLCCQLVAQPDCMTLDMMSGFLSQQQSIEGLQRRCRLYCVLKAGKISCYYSPEEIQAKVEPILIIPINKETRIRVVENDHQRPGSRLNLINPGNGDSASHVFIAESPDVLQEWLDSLWQHIYDQSQWQHTCDKLMEIDVLSPRKPPLFLTKQADSVYNDLSIGSPGKFESLTDIIHNKIEETNGRFLIGQEEETEPPHWAALFEGSRPIVVQKTVLSPGKESNRSITSPDTGSKKKRRAPPPPPDKLPFTSVSTNQEKENCKGPKPRAGRPSLDAKFSAIIQQLQKSHTSTRKNAPLGQIETGQQPEKRAEESDLPEYTKKEYIVDPQPPVPAPRNKLRMSFREKMNPKAW</sequence>
<proteinExistence type="evidence at transcript level"/>
<reference key="1">
    <citation type="submission" date="2005-07" db="EMBL/GenBank/DDBJ databases">
        <authorList>
            <consortium name="NIH - Zebrafish Gene Collection (ZGC) project"/>
        </authorList>
    </citation>
    <scope>NUCLEOTIDE SEQUENCE [LARGE SCALE MRNA]</scope>
    <source>
        <strain>AB</strain>
        <tissue>Embryo</tissue>
    </source>
</reference>
<name>RTKN2_DANRE</name>
<dbReference type="EMBL" id="BC083519">
    <property type="protein sequence ID" value="AAH83519.1"/>
    <property type="molecule type" value="mRNA"/>
</dbReference>
<dbReference type="EMBL" id="BC092947">
    <property type="protein sequence ID" value="AAH92947.1"/>
    <property type="status" value="ALT_SEQ"/>
    <property type="molecule type" value="mRNA"/>
</dbReference>
<dbReference type="EMBL" id="BC098873">
    <property type="protein sequence ID" value="AAH98873.1"/>
    <property type="molecule type" value="mRNA"/>
</dbReference>
<dbReference type="SMR" id="Q5XIZ9"/>
<dbReference type="FunCoup" id="Q5XIZ9">
    <property type="interactions" value="198"/>
</dbReference>
<dbReference type="STRING" id="7955.ENSDARP00000112959"/>
<dbReference type="PaxDb" id="7955-ENSDARP00000112959"/>
<dbReference type="AGR" id="ZFIN:ZDB-GENE-041010-225"/>
<dbReference type="ZFIN" id="ZDB-GENE-041010-225">
    <property type="gene designation" value="rtkn2"/>
</dbReference>
<dbReference type="eggNOG" id="ENOG502QRWR">
    <property type="taxonomic scope" value="Eukaryota"/>
</dbReference>
<dbReference type="InParanoid" id="Q5XIZ9"/>
<dbReference type="OrthoDB" id="5817051at2759"/>
<dbReference type="PhylomeDB" id="Q5XIZ9"/>
<dbReference type="PRO" id="PR:Q5XIZ9"/>
<dbReference type="Proteomes" id="UP000000437">
    <property type="component" value="Unplaced"/>
</dbReference>
<dbReference type="GO" id="GO:0030097">
    <property type="term" value="P:hemopoiesis"/>
    <property type="evidence" value="ECO:0000318"/>
    <property type="project" value="GO_Central"/>
</dbReference>
<dbReference type="GO" id="GO:0008284">
    <property type="term" value="P:positive regulation of cell population proliferation"/>
    <property type="evidence" value="ECO:0000318"/>
    <property type="project" value="GO_Central"/>
</dbReference>
<dbReference type="GO" id="GO:0007165">
    <property type="term" value="P:signal transduction"/>
    <property type="evidence" value="ECO:0007669"/>
    <property type="project" value="InterPro"/>
</dbReference>
<dbReference type="CDD" id="cd13249">
    <property type="entry name" value="PH_rhotekin2"/>
    <property type="match status" value="1"/>
</dbReference>
<dbReference type="Gene3D" id="2.30.29.30">
    <property type="entry name" value="Pleckstrin-homology domain (PH domain)/Phosphotyrosine-binding domain (PTB)"/>
    <property type="match status" value="1"/>
</dbReference>
<dbReference type="InterPro" id="IPR012966">
    <property type="entry name" value="AHD"/>
</dbReference>
<dbReference type="InterPro" id="IPR051364">
    <property type="entry name" value="Cytokinesis/Rho-signaling"/>
</dbReference>
<dbReference type="InterPro" id="IPR011072">
    <property type="entry name" value="HR1_rho-bd"/>
</dbReference>
<dbReference type="InterPro" id="IPR011993">
    <property type="entry name" value="PH-like_dom_sf"/>
</dbReference>
<dbReference type="InterPro" id="IPR001849">
    <property type="entry name" value="PH_domain"/>
</dbReference>
<dbReference type="PANTHER" id="PTHR21538">
    <property type="entry name" value="ANILLIN/RHOTEKIN RTKN"/>
    <property type="match status" value="1"/>
</dbReference>
<dbReference type="PANTHER" id="PTHR21538:SF21">
    <property type="entry name" value="RHOTEKIN-2"/>
    <property type="match status" value="1"/>
</dbReference>
<dbReference type="Pfam" id="PF08174">
    <property type="entry name" value="Anillin"/>
    <property type="match status" value="1"/>
</dbReference>
<dbReference type="SMART" id="SM00233">
    <property type="entry name" value="PH"/>
    <property type="match status" value="1"/>
</dbReference>
<dbReference type="SUPFAM" id="SSF50729">
    <property type="entry name" value="PH domain-like"/>
    <property type="match status" value="1"/>
</dbReference>
<dbReference type="PROSITE" id="PS50003">
    <property type="entry name" value="PH_DOMAIN"/>
    <property type="match status" value="1"/>
</dbReference>
<dbReference type="PROSITE" id="PS51860">
    <property type="entry name" value="REM_1"/>
    <property type="match status" value="1"/>
</dbReference>
<protein>
    <recommendedName>
        <fullName>Rhotekin-2</fullName>
    </recommendedName>
    <alternativeName>
        <fullName>Pleckstrin homology domain-containing family K member 1</fullName>
        <shortName>PH domain-containing family K member 1</shortName>
    </alternativeName>
</protein>
<feature type="chain" id="PRO_0000309328" description="Rhotekin-2">
    <location>
        <begin position="1"/>
        <end position="642"/>
    </location>
</feature>
<feature type="domain" description="REM-1" evidence="2">
    <location>
        <begin position="30"/>
        <end position="105"/>
    </location>
</feature>
<feature type="domain" description="PH" evidence="1">
    <location>
        <begin position="306"/>
        <end position="413"/>
    </location>
</feature>
<feature type="region of interest" description="Disordered" evidence="3">
    <location>
        <begin position="505"/>
        <end position="563"/>
    </location>
</feature>
<feature type="region of interest" description="Disordered" evidence="3">
    <location>
        <begin position="575"/>
        <end position="642"/>
    </location>
</feature>
<feature type="compositionally biased region" description="Basic and acidic residues" evidence="3">
    <location>
        <begin position="597"/>
        <end position="615"/>
    </location>
</feature>
<feature type="compositionally biased region" description="Basic and acidic residues" evidence="3">
    <location>
        <begin position="632"/>
        <end position="642"/>
    </location>
</feature>
<feature type="sequence conflict" description="In Ref. 1; AAH92947." evidence="4" ref="1">
    <original>S</original>
    <variation>N</variation>
    <location>
        <position position="43"/>
    </location>
</feature>
<feature type="sequence conflict" description="In Ref. 1; AAH92947." evidence="4" ref="1">
    <original>A</original>
    <variation>V</variation>
    <location>
        <position position="96"/>
    </location>
</feature>
<feature type="sequence conflict" description="In Ref. 1; AAH92947." evidence="4" ref="1">
    <original>H</original>
    <variation>Q</variation>
    <location>
        <position position="102"/>
    </location>
</feature>
<feature type="sequence conflict" description="In Ref. 1; AAH92947." evidence="4" ref="1">
    <original>T</original>
    <variation>M</variation>
    <location>
        <position position="441"/>
    </location>
</feature>
<feature type="sequence conflict" description="In Ref. 1; AAH92947." evidence="4" ref="1">
    <original>S</original>
    <variation>N</variation>
    <location>
        <position position="524"/>
    </location>
</feature>